<sequence>MKKLLVIDFREKIKYEDAWDLQKKLHDLRVKDTIYDTLILLEHFPVITLGKFGDEKNLLKTKEELKSMGIDFIRVDRGGDITYHGPSQLVGYFIFKVDGVKNFVLKVEKSIINVLHEYGIEAKESIEYPGVWVEDRKITAIGIAIKKRVSYHGFALNVNNDLAPFSYIIPCGLKDKKVTSILKEANFSPPMEDVKRKVCLSVVKEFGFDSFMVFNFSSCKELSNFGMLLEDL</sequence>
<gene>
    <name evidence="1" type="primary">lipB</name>
    <name type="ordered locus">DICTH_0601</name>
</gene>
<reference key="1">
    <citation type="journal article" date="2014" name="Genome Announc.">
        <title>Complete Genome Sequence of the Extreme Thermophile Dictyoglomus thermophilum H-6-12.</title>
        <authorList>
            <person name="Coil D.A."/>
            <person name="Badger J.H."/>
            <person name="Forberger H.C."/>
            <person name="Riggs F."/>
            <person name="Madupu R."/>
            <person name="Fedorova N."/>
            <person name="Ward N."/>
            <person name="Robb F.T."/>
            <person name="Eisen J.A."/>
        </authorList>
    </citation>
    <scope>NUCLEOTIDE SEQUENCE [LARGE SCALE GENOMIC DNA]</scope>
    <source>
        <strain>ATCC 35947 / DSM 3960 / H-6-12</strain>
    </source>
</reference>
<evidence type="ECO:0000255" key="1">
    <source>
        <dbReference type="HAMAP-Rule" id="MF_00013"/>
    </source>
</evidence>
<evidence type="ECO:0000255" key="2">
    <source>
        <dbReference type="PROSITE-ProRule" id="PRU01067"/>
    </source>
</evidence>
<protein>
    <recommendedName>
        <fullName evidence="1">Octanoyltransferase</fullName>
        <ecNumber evidence="1">2.3.1.181</ecNumber>
    </recommendedName>
    <alternativeName>
        <fullName evidence="1">Lipoate-protein ligase B</fullName>
    </alternativeName>
    <alternativeName>
        <fullName evidence="1">Lipoyl/octanoyl transferase</fullName>
    </alternativeName>
    <alternativeName>
        <fullName evidence="1">Octanoyl-[acyl-carrier-protein]-protein N-octanoyltransferase</fullName>
    </alternativeName>
</protein>
<accession>B5YD73</accession>
<name>LIPB_DICT6</name>
<dbReference type="EC" id="2.3.1.181" evidence="1"/>
<dbReference type="EMBL" id="CP001146">
    <property type="protein sequence ID" value="ACI18548.1"/>
    <property type="molecule type" value="Genomic_DNA"/>
</dbReference>
<dbReference type="RefSeq" id="WP_012547180.1">
    <property type="nucleotide sequence ID" value="NC_011297.1"/>
</dbReference>
<dbReference type="SMR" id="B5YD73"/>
<dbReference type="STRING" id="309799.DICTH_0601"/>
<dbReference type="PaxDb" id="309799-DICTH_0601"/>
<dbReference type="KEGG" id="dth:DICTH_0601"/>
<dbReference type="eggNOG" id="COG0321">
    <property type="taxonomic scope" value="Bacteria"/>
</dbReference>
<dbReference type="HOGENOM" id="CLU_035168_1_1_0"/>
<dbReference type="OrthoDB" id="9787061at2"/>
<dbReference type="UniPathway" id="UPA00538">
    <property type="reaction ID" value="UER00592"/>
</dbReference>
<dbReference type="Proteomes" id="UP000001733">
    <property type="component" value="Chromosome"/>
</dbReference>
<dbReference type="GO" id="GO:0005737">
    <property type="term" value="C:cytoplasm"/>
    <property type="evidence" value="ECO:0007669"/>
    <property type="project" value="UniProtKB-SubCell"/>
</dbReference>
<dbReference type="GO" id="GO:0033819">
    <property type="term" value="F:lipoyl(octanoyl) transferase activity"/>
    <property type="evidence" value="ECO:0007669"/>
    <property type="project" value="UniProtKB-EC"/>
</dbReference>
<dbReference type="GO" id="GO:0036211">
    <property type="term" value="P:protein modification process"/>
    <property type="evidence" value="ECO:0007669"/>
    <property type="project" value="InterPro"/>
</dbReference>
<dbReference type="CDD" id="cd16444">
    <property type="entry name" value="LipB"/>
    <property type="match status" value="1"/>
</dbReference>
<dbReference type="FunFam" id="3.30.930.10:FF:000189">
    <property type="entry name" value="Octanoyltransferase"/>
    <property type="match status" value="1"/>
</dbReference>
<dbReference type="Gene3D" id="3.30.930.10">
    <property type="entry name" value="Bira Bifunctional Protein, Domain 2"/>
    <property type="match status" value="1"/>
</dbReference>
<dbReference type="HAMAP" id="MF_00013">
    <property type="entry name" value="LipB"/>
    <property type="match status" value="1"/>
</dbReference>
<dbReference type="InterPro" id="IPR045864">
    <property type="entry name" value="aa-tRNA-synth_II/BPL/LPL"/>
</dbReference>
<dbReference type="InterPro" id="IPR004143">
    <property type="entry name" value="BPL_LPL_catalytic"/>
</dbReference>
<dbReference type="InterPro" id="IPR000544">
    <property type="entry name" value="Octanoyltransferase"/>
</dbReference>
<dbReference type="InterPro" id="IPR020605">
    <property type="entry name" value="Octanoyltransferase_CS"/>
</dbReference>
<dbReference type="NCBIfam" id="TIGR00214">
    <property type="entry name" value="lipB"/>
    <property type="match status" value="1"/>
</dbReference>
<dbReference type="NCBIfam" id="NF010925">
    <property type="entry name" value="PRK14345.1"/>
    <property type="match status" value="1"/>
</dbReference>
<dbReference type="PANTHER" id="PTHR10993:SF7">
    <property type="entry name" value="LIPOYLTRANSFERASE 2, MITOCHONDRIAL-RELATED"/>
    <property type="match status" value="1"/>
</dbReference>
<dbReference type="PANTHER" id="PTHR10993">
    <property type="entry name" value="OCTANOYLTRANSFERASE"/>
    <property type="match status" value="1"/>
</dbReference>
<dbReference type="Pfam" id="PF21948">
    <property type="entry name" value="LplA-B_cat"/>
    <property type="match status" value="1"/>
</dbReference>
<dbReference type="PIRSF" id="PIRSF016262">
    <property type="entry name" value="LPLase"/>
    <property type="match status" value="1"/>
</dbReference>
<dbReference type="SUPFAM" id="SSF55681">
    <property type="entry name" value="Class II aaRS and biotin synthetases"/>
    <property type="match status" value="1"/>
</dbReference>
<dbReference type="PROSITE" id="PS51733">
    <property type="entry name" value="BPL_LPL_CATALYTIC"/>
    <property type="match status" value="1"/>
</dbReference>
<dbReference type="PROSITE" id="PS01313">
    <property type="entry name" value="LIPB"/>
    <property type="match status" value="1"/>
</dbReference>
<organism>
    <name type="scientific">Dictyoglomus thermophilum (strain ATCC 35947 / DSM 3960 / H-6-12)</name>
    <dbReference type="NCBI Taxonomy" id="309799"/>
    <lineage>
        <taxon>Bacteria</taxon>
        <taxon>Pseudomonadati</taxon>
        <taxon>Dictyoglomota</taxon>
        <taxon>Dictyoglomia</taxon>
        <taxon>Dictyoglomales</taxon>
        <taxon>Dictyoglomaceae</taxon>
        <taxon>Dictyoglomus</taxon>
    </lineage>
</organism>
<keyword id="KW-0012">Acyltransferase</keyword>
<keyword id="KW-0963">Cytoplasm</keyword>
<keyword id="KW-0808">Transferase</keyword>
<feature type="chain" id="PRO_1000201793" description="Octanoyltransferase">
    <location>
        <begin position="1"/>
        <end position="232"/>
    </location>
</feature>
<feature type="domain" description="BPL/LPL catalytic" evidence="2">
    <location>
        <begin position="32"/>
        <end position="219"/>
    </location>
</feature>
<feature type="active site" description="Acyl-thioester intermediate" evidence="1">
    <location>
        <position position="171"/>
    </location>
</feature>
<feature type="binding site" evidence="1">
    <location>
        <begin position="77"/>
        <end position="84"/>
    </location>
    <ligand>
        <name>substrate</name>
    </ligand>
</feature>
<feature type="binding site" evidence="1">
    <location>
        <begin position="140"/>
        <end position="142"/>
    </location>
    <ligand>
        <name>substrate</name>
    </ligand>
</feature>
<feature type="binding site" evidence="1">
    <location>
        <begin position="153"/>
        <end position="155"/>
    </location>
    <ligand>
        <name>substrate</name>
    </ligand>
</feature>
<feature type="site" description="Lowers pKa of active site Cys" evidence="1">
    <location>
        <position position="137"/>
    </location>
</feature>
<proteinExistence type="inferred from homology"/>
<comment type="function">
    <text evidence="1">Catalyzes the transfer of endogenously produced octanoic acid from octanoyl-acyl-carrier-protein onto the lipoyl domains of lipoate-dependent enzymes. Lipoyl-ACP can also act as a substrate although octanoyl-ACP is likely to be the physiological substrate.</text>
</comment>
<comment type="catalytic activity">
    <reaction evidence="1">
        <text>octanoyl-[ACP] + L-lysyl-[protein] = N(6)-octanoyl-L-lysyl-[protein] + holo-[ACP] + H(+)</text>
        <dbReference type="Rhea" id="RHEA:17665"/>
        <dbReference type="Rhea" id="RHEA-COMP:9636"/>
        <dbReference type="Rhea" id="RHEA-COMP:9685"/>
        <dbReference type="Rhea" id="RHEA-COMP:9752"/>
        <dbReference type="Rhea" id="RHEA-COMP:9928"/>
        <dbReference type="ChEBI" id="CHEBI:15378"/>
        <dbReference type="ChEBI" id="CHEBI:29969"/>
        <dbReference type="ChEBI" id="CHEBI:64479"/>
        <dbReference type="ChEBI" id="CHEBI:78463"/>
        <dbReference type="ChEBI" id="CHEBI:78809"/>
        <dbReference type="EC" id="2.3.1.181"/>
    </reaction>
</comment>
<comment type="pathway">
    <text evidence="1">Protein modification; protein lipoylation via endogenous pathway; protein N(6)-(lipoyl)lysine from octanoyl-[acyl-carrier-protein]: step 1/2.</text>
</comment>
<comment type="subcellular location">
    <subcellularLocation>
        <location evidence="1">Cytoplasm</location>
    </subcellularLocation>
</comment>
<comment type="miscellaneous">
    <text evidence="1">In the reaction, the free carboxyl group of octanoic acid is attached via an amide linkage to the epsilon-amino group of a specific lysine residue of lipoyl domains of lipoate-dependent enzymes.</text>
</comment>
<comment type="similarity">
    <text evidence="1">Belongs to the LipB family.</text>
</comment>